<name>RIBB_NITV4</name>
<proteinExistence type="inferred from homology"/>
<dbReference type="EC" id="4.1.99.12" evidence="1"/>
<dbReference type="EMBL" id="CP000527">
    <property type="protein sequence ID" value="ABM28399.1"/>
    <property type="molecule type" value="Genomic_DNA"/>
</dbReference>
<dbReference type="RefSeq" id="WP_011792223.1">
    <property type="nucleotide sequence ID" value="NC_008751.1"/>
</dbReference>
<dbReference type="SMR" id="A1VD83"/>
<dbReference type="KEGG" id="dvl:Dvul_1381"/>
<dbReference type="HOGENOM" id="CLU_020273_3_0_7"/>
<dbReference type="UniPathway" id="UPA00275">
    <property type="reaction ID" value="UER00399"/>
</dbReference>
<dbReference type="Proteomes" id="UP000009173">
    <property type="component" value="Chromosome"/>
</dbReference>
<dbReference type="GO" id="GO:0005829">
    <property type="term" value="C:cytosol"/>
    <property type="evidence" value="ECO:0007669"/>
    <property type="project" value="TreeGrafter"/>
</dbReference>
<dbReference type="GO" id="GO:0008686">
    <property type="term" value="F:3,4-dihydroxy-2-butanone-4-phosphate synthase activity"/>
    <property type="evidence" value="ECO:0007669"/>
    <property type="project" value="UniProtKB-UniRule"/>
</dbReference>
<dbReference type="GO" id="GO:0000287">
    <property type="term" value="F:magnesium ion binding"/>
    <property type="evidence" value="ECO:0007669"/>
    <property type="project" value="UniProtKB-UniRule"/>
</dbReference>
<dbReference type="GO" id="GO:0030145">
    <property type="term" value="F:manganese ion binding"/>
    <property type="evidence" value="ECO:0007669"/>
    <property type="project" value="UniProtKB-UniRule"/>
</dbReference>
<dbReference type="GO" id="GO:0009231">
    <property type="term" value="P:riboflavin biosynthetic process"/>
    <property type="evidence" value="ECO:0007669"/>
    <property type="project" value="UniProtKB-UniRule"/>
</dbReference>
<dbReference type="FunFam" id="3.90.870.10:FF:000002">
    <property type="entry name" value="3,4-dihydroxy-2-butanone 4-phosphate synthase"/>
    <property type="match status" value="1"/>
</dbReference>
<dbReference type="Gene3D" id="3.90.870.10">
    <property type="entry name" value="DHBP synthase"/>
    <property type="match status" value="1"/>
</dbReference>
<dbReference type="HAMAP" id="MF_00180">
    <property type="entry name" value="RibB"/>
    <property type="match status" value="1"/>
</dbReference>
<dbReference type="InterPro" id="IPR017945">
    <property type="entry name" value="DHBP_synth_RibB-like_a/b_dom"/>
</dbReference>
<dbReference type="InterPro" id="IPR000422">
    <property type="entry name" value="DHBP_synthase_RibB"/>
</dbReference>
<dbReference type="NCBIfam" id="TIGR00506">
    <property type="entry name" value="ribB"/>
    <property type="match status" value="1"/>
</dbReference>
<dbReference type="PANTHER" id="PTHR21327:SF38">
    <property type="entry name" value="3,4-DIHYDROXY-2-BUTANONE 4-PHOSPHATE SYNTHASE"/>
    <property type="match status" value="1"/>
</dbReference>
<dbReference type="PANTHER" id="PTHR21327">
    <property type="entry name" value="GTP CYCLOHYDROLASE II-RELATED"/>
    <property type="match status" value="1"/>
</dbReference>
<dbReference type="Pfam" id="PF00926">
    <property type="entry name" value="DHBP_synthase"/>
    <property type="match status" value="1"/>
</dbReference>
<dbReference type="SUPFAM" id="SSF55821">
    <property type="entry name" value="YrdC/RibB"/>
    <property type="match status" value="1"/>
</dbReference>
<organism>
    <name type="scientific">Nitratidesulfovibrio vulgaris (strain DP4)</name>
    <name type="common">Desulfovibrio vulgaris</name>
    <dbReference type="NCBI Taxonomy" id="391774"/>
    <lineage>
        <taxon>Bacteria</taxon>
        <taxon>Pseudomonadati</taxon>
        <taxon>Thermodesulfobacteriota</taxon>
        <taxon>Desulfovibrionia</taxon>
        <taxon>Desulfovibrionales</taxon>
        <taxon>Desulfovibrionaceae</taxon>
        <taxon>Nitratidesulfovibrio</taxon>
    </lineage>
</organism>
<reference key="1">
    <citation type="journal article" date="2009" name="Environ. Microbiol.">
        <title>Contribution of mobile genetic elements to Desulfovibrio vulgaris genome plasticity.</title>
        <authorList>
            <person name="Walker C.B."/>
            <person name="Stolyar S."/>
            <person name="Chivian D."/>
            <person name="Pinel N."/>
            <person name="Gabster J.A."/>
            <person name="Dehal P.S."/>
            <person name="He Z."/>
            <person name="Yang Z.K."/>
            <person name="Yen H.C."/>
            <person name="Zhou J."/>
            <person name="Wall J.D."/>
            <person name="Hazen T.C."/>
            <person name="Arkin A.P."/>
            <person name="Stahl D.A."/>
        </authorList>
    </citation>
    <scope>NUCLEOTIDE SEQUENCE [LARGE SCALE GENOMIC DNA]</scope>
    <source>
        <strain>DP4</strain>
    </source>
</reference>
<keyword id="KW-0456">Lyase</keyword>
<keyword id="KW-0460">Magnesium</keyword>
<keyword id="KW-0464">Manganese</keyword>
<keyword id="KW-0479">Metal-binding</keyword>
<keyword id="KW-0686">Riboflavin biosynthesis</keyword>
<accession>A1VD83</accession>
<sequence>MNQHLLEQFGTTHERVERGLAALRTGQGVLVADDADRENEGDLIFAAETLTPAQMAMMIRECSGIVCLCLPEERVSRLGLPMMVAHNTSSMGTAFTISIEAAEGVTTGVSAADRVRTVQAAIDDAACPGCLRSPGHVFPLRASPGGVLERRGHTEATVDLMRLAGLKPYGVLCELTNPDGTMARLPQLVDFAQRNRMTVLTVEDLVAYRQDKGL</sequence>
<feature type="chain" id="PRO_1000040604" description="3,4-dihydroxy-2-butanone 4-phosphate synthase">
    <location>
        <begin position="1"/>
        <end position="214"/>
    </location>
</feature>
<feature type="binding site" evidence="1">
    <location>
        <begin position="37"/>
        <end position="38"/>
    </location>
    <ligand>
        <name>D-ribulose 5-phosphate</name>
        <dbReference type="ChEBI" id="CHEBI:58121"/>
    </ligand>
</feature>
<feature type="binding site" evidence="1">
    <location>
        <position position="38"/>
    </location>
    <ligand>
        <name>Mg(2+)</name>
        <dbReference type="ChEBI" id="CHEBI:18420"/>
        <label>1</label>
    </ligand>
</feature>
<feature type="binding site" evidence="1">
    <location>
        <position position="38"/>
    </location>
    <ligand>
        <name>Mg(2+)</name>
        <dbReference type="ChEBI" id="CHEBI:18420"/>
        <label>2</label>
    </ligand>
</feature>
<feature type="binding site" evidence="1">
    <location>
        <position position="42"/>
    </location>
    <ligand>
        <name>D-ribulose 5-phosphate</name>
        <dbReference type="ChEBI" id="CHEBI:58121"/>
    </ligand>
</feature>
<feature type="binding site" evidence="1">
    <location>
        <begin position="150"/>
        <end position="154"/>
    </location>
    <ligand>
        <name>D-ribulose 5-phosphate</name>
        <dbReference type="ChEBI" id="CHEBI:58121"/>
    </ligand>
</feature>
<feature type="binding site" evidence="1">
    <location>
        <position position="153"/>
    </location>
    <ligand>
        <name>Mg(2+)</name>
        <dbReference type="ChEBI" id="CHEBI:18420"/>
        <label>2</label>
    </ligand>
</feature>
<feature type="binding site" evidence="1">
    <location>
        <position position="174"/>
    </location>
    <ligand>
        <name>D-ribulose 5-phosphate</name>
        <dbReference type="ChEBI" id="CHEBI:58121"/>
    </ligand>
</feature>
<feature type="site" description="Essential for catalytic activity" evidence="1">
    <location>
        <position position="136"/>
    </location>
</feature>
<feature type="site" description="Essential for catalytic activity" evidence="1">
    <location>
        <position position="174"/>
    </location>
</feature>
<gene>
    <name evidence="1" type="primary">ribB</name>
    <name type="ordered locus">Dvul_1381</name>
</gene>
<evidence type="ECO:0000255" key="1">
    <source>
        <dbReference type="HAMAP-Rule" id="MF_00180"/>
    </source>
</evidence>
<comment type="function">
    <text evidence="1">Catalyzes the conversion of D-ribulose 5-phosphate to formate and 3,4-dihydroxy-2-butanone 4-phosphate.</text>
</comment>
<comment type="catalytic activity">
    <reaction evidence="1">
        <text>D-ribulose 5-phosphate = (2S)-2-hydroxy-3-oxobutyl phosphate + formate + H(+)</text>
        <dbReference type="Rhea" id="RHEA:18457"/>
        <dbReference type="ChEBI" id="CHEBI:15378"/>
        <dbReference type="ChEBI" id="CHEBI:15740"/>
        <dbReference type="ChEBI" id="CHEBI:58121"/>
        <dbReference type="ChEBI" id="CHEBI:58830"/>
        <dbReference type="EC" id="4.1.99.12"/>
    </reaction>
</comment>
<comment type="cofactor">
    <cofactor evidence="1">
        <name>Mg(2+)</name>
        <dbReference type="ChEBI" id="CHEBI:18420"/>
    </cofactor>
    <cofactor evidence="1">
        <name>Mn(2+)</name>
        <dbReference type="ChEBI" id="CHEBI:29035"/>
    </cofactor>
    <text evidence="1">Binds 2 divalent metal cations per subunit. Magnesium or manganese.</text>
</comment>
<comment type="pathway">
    <text evidence="1">Cofactor biosynthesis; riboflavin biosynthesis; 2-hydroxy-3-oxobutyl phosphate from D-ribulose 5-phosphate: step 1/1.</text>
</comment>
<comment type="subunit">
    <text evidence="1">Homodimer.</text>
</comment>
<comment type="similarity">
    <text evidence="1">Belongs to the DHBP synthase family.</text>
</comment>
<protein>
    <recommendedName>
        <fullName evidence="1">3,4-dihydroxy-2-butanone 4-phosphate synthase</fullName>
        <shortName evidence="1">DHBP synthase</shortName>
        <ecNumber evidence="1">4.1.99.12</ecNumber>
    </recommendedName>
</protein>